<name>TILS_BRADU</name>
<protein>
    <recommendedName>
        <fullName evidence="1">tRNA(Ile)-lysidine synthase</fullName>
        <ecNumber evidence="1">6.3.4.19</ecNumber>
    </recommendedName>
    <alternativeName>
        <fullName evidence="1">tRNA(Ile)-2-lysyl-cytidine synthase</fullName>
    </alternativeName>
    <alternativeName>
        <fullName evidence="1">tRNA(Ile)-lysidine synthetase</fullName>
    </alternativeName>
</protein>
<reference key="1">
    <citation type="journal article" date="1999" name="J. Bacteriol.">
        <title>Characterization of the Bradyrhizobium japonicum ftsH gene and its product.</title>
        <authorList>
            <person name="Narberhaus F."/>
            <person name="Urech C."/>
            <person name="Hennecke H."/>
        </authorList>
    </citation>
    <scope>NUCLEOTIDE SEQUENCE [GENOMIC DNA]</scope>
    <source>
        <strain>USDA 110spc4</strain>
    </source>
</reference>
<reference key="2">
    <citation type="journal article" date="2002" name="DNA Res.">
        <title>Complete genomic sequence of nitrogen-fixing symbiotic bacterium Bradyrhizobium japonicum USDA110.</title>
        <authorList>
            <person name="Kaneko T."/>
            <person name="Nakamura Y."/>
            <person name="Sato S."/>
            <person name="Minamisawa K."/>
            <person name="Uchiumi T."/>
            <person name="Sasamoto S."/>
            <person name="Watanabe A."/>
            <person name="Idesawa K."/>
            <person name="Iriguchi M."/>
            <person name="Kawashima K."/>
            <person name="Kohara M."/>
            <person name="Matsumoto M."/>
            <person name="Shimpo S."/>
            <person name="Tsuruoka H."/>
            <person name="Wada T."/>
            <person name="Yamada M."/>
            <person name="Tabata S."/>
        </authorList>
    </citation>
    <scope>NUCLEOTIDE SEQUENCE [LARGE SCALE GENOMIC DNA]</scope>
    <source>
        <strain>JCM 10833 / BCRC 13528 / IAM 13628 / NBRC 14792 / USDA 110</strain>
    </source>
</reference>
<sequence length="361" mass="38526">MSDDDNSPISAREAKQLFAELKSAPALVLAVSGGPDSIALMWLAARWQRSLARGPRLTVVTVDHGLRAEAAREAREVKRLATELGLPHRTLRWRGAKPKTGLPAAAREARYRLLMQAARSAGASHVLTAHTRDDQAETLLMRLVRGSGLAGLSAMARLTERDGIVLARPLLDVPKAQLIATLKRAKIGFADDPTNRDTAFTRPRLRALLPQLAAEGGDARSLARLAARLARANAAVEVLTDGAERFLRLRDRDDAPHGPDMRSFEAGAFATLPEEVRLRMLLRAINALGHEGPAELGKVETLLAALDQAIAAGMAAAPRAAVNGRPVLKQTLAGALISLAGGRIQIAPAPARRRKGDRGGS</sequence>
<gene>
    <name evidence="1" type="primary">tilS</name>
    <name type="ordered locus">bll7147</name>
</gene>
<feature type="chain" id="PRO_0000181661" description="tRNA(Ile)-lysidine synthase">
    <location>
        <begin position="1"/>
        <end position="361"/>
    </location>
</feature>
<feature type="binding site" evidence="1">
    <location>
        <begin position="32"/>
        <end position="37"/>
    </location>
    <ligand>
        <name>ATP</name>
        <dbReference type="ChEBI" id="CHEBI:30616"/>
    </ligand>
</feature>
<keyword id="KW-0067">ATP-binding</keyword>
<keyword id="KW-0963">Cytoplasm</keyword>
<keyword id="KW-0436">Ligase</keyword>
<keyword id="KW-0547">Nucleotide-binding</keyword>
<keyword id="KW-1185">Reference proteome</keyword>
<keyword id="KW-0819">tRNA processing</keyword>
<comment type="function">
    <text evidence="1">Ligates lysine onto the cytidine present at position 34 of the AUA codon-specific tRNA(Ile) that contains the anticodon CAU, in an ATP-dependent manner. Cytidine is converted to lysidine, thus changing the amino acid specificity of the tRNA from methionine to isoleucine.</text>
</comment>
<comment type="catalytic activity">
    <reaction evidence="1">
        <text>cytidine(34) in tRNA(Ile2) + L-lysine + ATP = lysidine(34) in tRNA(Ile2) + AMP + diphosphate + H(+)</text>
        <dbReference type="Rhea" id="RHEA:43744"/>
        <dbReference type="Rhea" id="RHEA-COMP:10625"/>
        <dbReference type="Rhea" id="RHEA-COMP:10670"/>
        <dbReference type="ChEBI" id="CHEBI:15378"/>
        <dbReference type="ChEBI" id="CHEBI:30616"/>
        <dbReference type="ChEBI" id="CHEBI:32551"/>
        <dbReference type="ChEBI" id="CHEBI:33019"/>
        <dbReference type="ChEBI" id="CHEBI:82748"/>
        <dbReference type="ChEBI" id="CHEBI:83665"/>
        <dbReference type="ChEBI" id="CHEBI:456215"/>
        <dbReference type="EC" id="6.3.4.19"/>
    </reaction>
</comment>
<comment type="subcellular location">
    <subcellularLocation>
        <location evidence="1">Cytoplasm</location>
    </subcellularLocation>
</comment>
<comment type="domain">
    <text>The N-terminal region contains the highly conserved SGGXDS motif, predicted to be a P-loop motif involved in ATP binding.</text>
</comment>
<comment type="similarity">
    <text evidence="1">Belongs to the tRNA(Ile)-lysidine synthase family.</text>
</comment>
<proteinExistence type="inferred from homology"/>
<organism>
    <name type="scientific">Bradyrhizobium diazoefficiens (strain JCM 10833 / BCRC 13528 / IAM 13628 / NBRC 14792 / USDA 110)</name>
    <dbReference type="NCBI Taxonomy" id="224911"/>
    <lineage>
        <taxon>Bacteria</taxon>
        <taxon>Pseudomonadati</taxon>
        <taxon>Pseudomonadota</taxon>
        <taxon>Alphaproteobacteria</taxon>
        <taxon>Hyphomicrobiales</taxon>
        <taxon>Nitrobacteraceae</taxon>
        <taxon>Bradyrhizobium</taxon>
    </lineage>
</organism>
<dbReference type="EC" id="6.3.4.19" evidence="1"/>
<dbReference type="EMBL" id="AJ243808">
    <property type="protein sequence ID" value="CAB51028.1"/>
    <property type="molecule type" value="Genomic_DNA"/>
</dbReference>
<dbReference type="EMBL" id="BA000040">
    <property type="protein sequence ID" value="BAC52412.1"/>
    <property type="molecule type" value="Genomic_DNA"/>
</dbReference>
<dbReference type="RefSeq" id="NP_773787.1">
    <property type="nucleotide sequence ID" value="NC_004463.1"/>
</dbReference>
<dbReference type="RefSeq" id="WP_011089882.1">
    <property type="nucleotide sequence ID" value="NC_004463.1"/>
</dbReference>
<dbReference type="SMR" id="Q9XBG6"/>
<dbReference type="FunCoup" id="Q9XBG6">
    <property type="interactions" value="369"/>
</dbReference>
<dbReference type="STRING" id="224911.AAV28_33370"/>
<dbReference type="EnsemblBacteria" id="BAC52412">
    <property type="protein sequence ID" value="BAC52412"/>
    <property type="gene ID" value="BAC52412"/>
</dbReference>
<dbReference type="GeneID" id="46494110"/>
<dbReference type="KEGG" id="bja:bll7147"/>
<dbReference type="PATRIC" id="fig|224911.44.peg.7207"/>
<dbReference type="eggNOG" id="COG0037">
    <property type="taxonomic scope" value="Bacteria"/>
</dbReference>
<dbReference type="HOGENOM" id="CLU_018869_3_2_5"/>
<dbReference type="InParanoid" id="Q9XBG6"/>
<dbReference type="OrthoDB" id="9807403at2"/>
<dbReference type="PhylomeDB" id="Q9XBG6"/>
<dbReference type="Proteomes" id="UP000002526">
    <property type="component" value="Chromosome"/>
</dbReference>
<dbReference type="GO" id="GO:0005737">
    <property type="term" value="C:cytoplasm"/>
    <property type="evidence" value="ECO:0007669"/>
    <property type="project" value="UniProtKB-SubCell"/>
</dbReference>
<dbReference type="GO" id="GO:0005524">
    <property type="term" value="F:ATP binding"/>
    <property type="evidence" value="ECO:0007669"/>
    <property type="project" value="UniProtKB-UniRule"/>
</dbReference>
<dbReference type="GO" id="GO:0032267">
    <property type="term" value="F:tRNA(Ile)-lysidine synthase activity"/>
    <property type="evidence" value="ECO:0007669"/>
    <property type="project" value="UniProtKB-EC"/>
</dbReference>
<dbReference type="GO" id="GO:0006400">
    <property type="term" value="P:tRNA modification"/>
    <property type="evidence" value="ECO:0007669"/>
    <property type="project" value="UniProtKB-UniRule"/>
</dbReference>
<dbReference type="CDD" id="cd01992">
    <property type="entry name" value="TilS_N"/>
    <property type="match status" value="1"/>
</dbReference>
<dbReference type="Gene3D" id="3.40.50.620">
    <property type="entry name" value="HUPs"/>
    <property type="match status" value="1"/>
</dbReference>
<dbReference type="HAMAP" id="MF_01161">
    <property type="entry name" value="tRNA_Ile_lys_synt"/>
    <property type="match status" value="1"/>
</dbReference>
<dbReference type="InterPro" id="IPR014729">
    <property type="entry name" value="Rossmann-like_a/b/a_fold"/>
</dbReference>
<dbReference type="InterPro" id="IPR011063">
    <property type="entry name" value="TilS/TtcA_N"/>
</dbReference>
<dbReference type="InterPro" id="IPR012094">
    <property type="entry name" value="tRNA_Ile_lys_synt"/>
</dbReference>
<dbReference type="InterPro" id="IPR012795">
    <property type="entry name" value="tRNA_Ile_lys_synt_N"/>
</dbReference>
<dbReference type="NCBIfam" id="TIGR02432">
    <property type="entry name" value="lysidine_TilS_N"/>
    <property type="match status" value="1"/>
</dbReference>
<dbReference type="PANTHER" id="PTHR43033">
    <property type="entry name" value="TRNA(ILE)-LYSIDINE SYNTHASE-RELATED"/>
    <property type="match status" value="1"/>
</dbReference>
<dbReference type="PANTHER" id="PTHR43033:SF1">
    <property type="entry name" value="TRNA(ILE)-LYSIDINE SYNTHASE-RELATED"/>
    <property type="match status" value="1"/>
</dbReference>
<dbReference type="Pfam" id="PF01171">
    <property type="entry name" value="ATP_bind_3"/>
    <property type="match status" value="1"/>
</dbReference>
<dbReference type="SUPFAM" id="SSF52402">
    <property type="entry name" value="Adenine nucleotide alpha hydrolases-like"/>
    <property type="match status" value="1"/>
</dbReference>
<evidence type="ECO:0000255" key="1">
    <source>
        <dbReference type="HAMAP-Rule" id="MF_01161"/>
    </source>
</evidence>
<accession>Q9XBG6</accession>
<accession>Q79U41</accession>